<feature type="chain" id="PRO_0000118930" description="Exocyst complex component sec6">
    <location>
        <begin position="1"/>
        <end position="752"/>
    </location>
</feature>
<dbReference type="EMBL" id="CU329672">
    <property type="protein sequence ID" value="CAA21114.2"/>
    <property type="molecule type" value="Genomic_DNA"/>
</dbReference>
<dbReference type="PIR" id="T40884">
    <property type="entry name" value="T40884"/>
</dbReference>
<dbReference type="RefSeq" id="NP_587736.2">
    <property type="nucleotide sequence ID" value="NM_001022731.2"/>
</dbReference>
<dbReference type="SMR" id="O74846"/>
<dbReference type="BioGRID" id="275526">
    <property type="interactions" value="34"/>
</dbReference>
<dbReference type="FunCoup" id="O74846">
    <property type="interactions" value="120"/>
</dbReference>
<dbReference type="STRING" id="284812.O74846"/>
<dbReference type="SwissPalm" id="O74846"/>
<dbReference type="PaxDb" id="4896-SPCC1235.10c.1"/>
<dbReference type="EnsemblFungi" id="SPCC1235.10c.1">
    <property type="protein sequence ID" value="SPCC1235.10c.1:pep"/>
    <property type="gene ID" value="SPCC1235.10c"/>
</dbReference>
<dbReference type="GeneID" id="2538952"/>
<dbReference type="KEGG" id="spo:2538952"/>
<dbReference type="PomBase" id="SPCC1235.10c">
    <property type="gene designation" value="sec6"/>
</dbReference>
<dbReference type="VEuPathDB" id="FungiDB:SPCC1235.10c"/>
<dbReference type="eggNOG" id="KOG2286">
    <property type="taxonomic scope" value="Eukaryota"/>
</dbReference>
<dbReference type="HOGENOM" id="CLU_011776_2_0_1"/>
<dbReference type="InParanoid" id="O74846"/>
<dbReference type="OMA" id="MNIGPKT"/>
<dbReference type="PRO" id="PR:O74846"/>
<dbReference type="Proteomes" id="UP000002485">
    <property type="component" value="Chromosome III"/>
</dbReference>
<dbReference type="GO" id="GO:0051285">
    <property type="term" value="C:cell cortex of cell tip"/>
    <property type="evidence" value="ECO:0000314"/>
    <property type="project" value="PomBase"/>
</dbReference>
<dbReference type="GO" id="GO:1902716">
    <property type="term" value="C:cell cortex of growing cell tip"/>
    <property type="evidence" value="ECO:0000314"/>
    <property type="project" value="PomBase"/>
</dbReference>
<dbReference type="GO" id="GO:0032153">
    <property type="term" value="C:cell division site"/>
    <property type="evidence" value="ECO:0000314"/>
    <property type="project" value="PomBase"/>
</dbReference>
<dbReference type="GO" id="GO:0051286">
    <property type="term" value="C:cell tip"/>
    <property type="evidence" value="ECO:0000314"/>
    <property type="project" value="PomBase"/>
</dbReference>
<dbReference type="GO" id="GO:0090726">
    <property type="term" value="C:cortical dynamic polarity patch"/>
    <property type="evidence" value="ECO:0000314"/>
    <property type="project" value="PomBase"/>
</dbReference>
<dbReference type="GO" id="GO:0000145">
    <property type="term" value="C:exocyst"/>
    <property type="evidence" value="ECO:0000314"/>
    <property type="project" value="PomBase"/>
</dbReference>
<dbReference type="GO" id="GO:0097575">
    <property type="term" value="C:lateral cell cortex"/>
    <property type="evidence" value="ECO:0000314"/>
    <property type="project" value="PomBase"/>
</dbReference>
<dbReference type="GO" id="GO:0005634">
    <property type="term" value="C:nucleus"/>
    <property type="evidence" value="ECO:0007005"/>
    <property type="project" value="PomBase"/>
</dbReference>
<dbReference type="GO" id="GO:0000922">
    <property type="term" value="C:spindle pole"/>
    <property type="evidence" value="ECO:0007669"/>
    <property type="project" value="UniProtKB-SubCell"/>
</dbReference>
<dbReference type="GO" id="GO:0000149">
    <property type="term" value="F:SNARE binding"/>
    <property type="evidence" value="ECO:0000318"/>
    <property type="project" value="GO_Central"/>
</dbReference>
<dbReference type="GO" id="GO:0051601">
    <property type="term" value="P:exocyst localization"/>
    <property type="evidence" value="ECO:0000318"/>
    <property type="project" value="GO_Central"/>
</dbReference>
<dbReference type="GO" id="GO:0006887">
    <property type="term" value="P:exocytosis"/>
    <property type="evidence" value="ECO:0000318"/>
    <property type="project" value="GO_Central"/>
</dbReference>
<dbReference type="GO" id="GO:0006886">
    <property type="term" value="P:intracellular protein transport"/>
    <property type="evidence" value="ECO:0000305"/>
    <property type="project" value="PomBase"/>
</dbReference>
<dbReference type="GO" id="GO:0090522">
    <property type="term" value="P:vesicle tethering involved in exocytosis"/>
    <property type="evidence" value="ECO:0000305"/>
    <property type="project" value="PomBase"/>
</dbReference>
<dbReference type="Gene3D" id="1.10.357.50">
    <property type="match status" value="1"/>
</dbReference>
<dbReference type="Gene3D" id="1.10.357.70">
    <property type="entry name" value="Exocyst complex component Sec6, C-terminal domain"/>
    <property type="match status" value="1"/>
</dbReference>
<dbReference type="InterPro" id="IPR010326">
    <property type="entry name" value="EXOC3/Sec6"/>
</dbReference>
<dbReference type="InterPro" id="IPR042532">
    <property type="entry name" value="EXOC3/Sec6_C"/>
</dbReference>
<dbReference type="PANTHER" id="PTHR21292:SF1">
    <property type="entry name" value="EXOCYST COMPLEX COMPONENT 3"/>
    <property type="match status" value="1"/>
</dbReference>
<dbReference type="PANTHER" id="PTHR21292">
    <property type="entry name" value="EXOCYST COMPLEX COMPONENT SEC6-RELATED"/>
    <property type="match status" value="1"/>
</dbReference>
<dbReference type="Pfam" id="PF06046">
    <property type="entry name" value="Sec6"/>
    <property type="match status" value="1"/>
</dbReference>
<keyword id="KW-0963">Cytoplasm</keyword>
<keyword id="KW-0206">Cytoskeleton</keyword>
<keyword id="KW-0268">Exocytosis</keyword>
<keyword id="KW-0539">Nucleus</keyword>
<keyword id="KW-0653">Protein transport</keyword>
<keyword id="KW-1185">Reference proteome</keyword>
<keyword id="KW-0813">Transport</keyword>
<organism>
    <name type="scientific">Schizosaccharomyces pombe (strain 972 / ATCC 24843)</name>
    <name type="common">Fission yeast</name>
    <dbReference type="NCBI Taxonomy" id="284812"/>
    <lineage>
        <taxon>Eukaryota</taxon>
        <taxon>Fungi</taxon>
        <taxon>Dikarya</taxon>
        <taxon>Ascomycota</taxon>
        <taxon>Taphrinomycotina</taxon>
        <taxon>Schizosaccharomycetes</taxon>
        <taxon>Schizosaccharomycetales</taxon>
        <taxon>Schizosaccharomycetaceae</taxon>
        <taxon>Schizosaccharomyces</taxon>
    </lineage>
</organism>
<proteinExistence type="evidence at protein level"/>
<name>SEC6_SCHPO</name>
<protein>
    <recommendedName>
        <fullName>Exocyst complex component sec6</fullName>
    </recommendedName>
</protein>
<evidence type="ECO:0000269" key="1">
    <source>
    </source>
</evidence>
<evidence type="ECO:0000269" key="2">
    <source>
    </source>
</evidence>
<evidence type="ECO:0000305" key="3"/>
<accession>O74846</accession>
<reference key="1">
    <citation type="journal article" date="2002" name="Nature">
        <title>The genome sequence of Schizosaccharomyces pombe.</title>
        <authorList>
            <person name="Wood V."/>
            <person name="Gwilliam R."/>
            <person name="Rajandream M.A."/>
            <person name="Lyne M.H."/>
            <person name="Lyne R."/>
            <person name="Stewart A."/>
            <person name="Sgouros J.G."/>
            <person name="Peat N."/>
            <person name="Hayles J."/>
            <person name="Baker S.G."/>
            <person name="Basham D."/>
            <person name="Bowman S."/>
            <person name="Brooks K."/>
            <person name="Brown D."/>
            <person name="Brown S."/>
            <person name="Chillingworth T."/>
            <person name="Churcher C.M."/>
            <person name="Collins M."/>
            <person name="Connor R."/>
            <person name="Cronin A."/>
            <person name="Davis P."/>
            <person name="Feltwell T."/>
            <person name="Fraser A."/>
            <person name="Gentles S."/>
            <person name="Goble A."/>
            <person name="Hamlin N."/>
            <person name="Harris D.E."/>
            <person name="Hidalgo J."/>
            <person name="Hodgson G."/>
            <person name="Holroyd S."/>
            <person name="Hornsby T."/>
            <person name="Howarth S."/>
            <person name="Huckle E.J."/>
            <person name="Hunt S."/>
            <person name="Jagels K."/>
            <person name="James K.D."/>
            <person name="Jones L."/>
            <person name="Jones M."/>
            <person name="Leather S."/>
            <person name="McDonald S."/>
            <person name="McLean J."/>
            <person name="Mooney P."/>
            <person name="Moule S."/>
            <person name="Mungall K.L."/>
            <person name="Murphy L.D."/>
            <person name="Niblett D."/>
            <person name="Odell C."/>
            <person name="Oliver K."/>
            <person name="O'Neil S."/>
            <person name="Pearson D."/>
            <person name="Quail M.A."/>
            <person name="Rabbinowitsch E."/>
            <person name="Rutherford K.M."/>
            <person name="Rutter S."/>
            <person name="Saunders D."/>
            <person name="Seeger K."/>
            <person name="Sharp S."/>
            <person name="Skelton J."/>
            <person name="Simmonds M.N."/>
            <person name="Squares R."/>
            <person name="Squares S."/>
            <person name="Stevens K."/>
            <person name="Taylor K."/>
            <person name="Taylor R.G."/>
            <person name="Tivey A."/>
            <person name="Walsh S.V."/>
            <person name="Warren T."/>
            <person name="Whitehead S."/>
            <person name="Woodward J.R."/>
            <person name="Volckaert G."/>
            <person name="Aert R."/>
            <person name="Robben J."/>
            <person name="Grymonprez B."/>
            <person name="Weltjens I."/>
            <person name="Vanstreels E."/>
            <person name="Rieger M."/>
            <person name="Schaefer M."/>
            <person name="Mueller-Auer S."/>
            <person name="Gabel C."/>
            <person name="Fuchs M."/>
            <person name="Duesterhoeft A."/>
            <person name="Fritzc C."/>
            <person name="Holzer E."/>
            <person name="Moestl D."/>
            <person name="Hilbert H."/>
            <person name="Borzym K."/>
            <person name="Langer I."/>
            <person name="Beck A."/>
            <person name="Lehrach H."/>
            <person name="Reinhardt R."/>
            <person name="Pohl T.M."/>
            <person name="Eger P."/>
            <person name="Zimmermann W."/>
            <person name="Wedler H."/>
            <person name="Wambutt R."/>
            <person name="Purnelle B."/>
            <person name="Goffeau A."/>
            <person name="Cadieu E."/>
            <person name="Dreano S."/>
            <person name="Gloux S."/>
            <person name="Lelaure V."/>
            <person name="Mottier S."/>
            <person name="Galibert F."/>
            <person name="Aves S.J."/>
            <person name="Xiang Z."/>
            <person name="Hunt C."/>
            <person name="Moore K."/>
            <person name="Hurst S.M."/>
            <person name="Lucas M."/>
            <person name="Rochet M."/>
            <person name="Gaillardin C."/>
            <person name="Tallada V.A."/>
            <person name="Garzon A."/>
            <person name="Thode G."/>
            <person name="Daga R.R."/>
            <person name="Cruzado L."/>
            <person name="Jimenez J."/>
            <person name="Sanchez M."/>
            <person name="del Rey F."/>
            <person name="Benito J."/>
            <person name="Dominguez A."/>
            <person name="Revuelta J.L."/>
            <person name="Moreno S."/>
            <person name="Armstrong J."/>
            <person name="Forsburg S.L."/>
            <person name="Cerutti L."/>
            <person name="Lowe T."/>
            <person name="McCombie W.R."/>
            <person name="Paulsen I."/>
            <person name="Potashkin J."/>
            <person name="Shpakovski G.V."/>
            <person name="Ussery D."/>
            <person name="Barrell B.G."/>
            <person name="Nurse P."/>
        </authorList>
    </citation>
    <scope>NUCLEOTIDE SEQUENCE [LARGE SCALE GENOMIC DNA]</scope>
    <source>
        <strain>972 / ATCC 24843</strain>
    </source>
</reference>
<reference key="2">
    <citation type="journal article" date="2011" name="Science">
        <title>Comparative functional genomics of the fission yeasts.</title>
        <authorList>
            <person name="Rhind N."/>
            <person name="Chen Z."/>
            <person name="Yassour M."/>
            <person name="Thompson D.A."/>
            <person name="Haas B.J."/>
            <person name="Habib N."/>
            <person name="Wapinski I."/>
            <person name="Roy S."/>
            <person name="Lin M.F."/>
            <person name="Heiman D.I."/>
            <person name="Young S.K."/>
            <person name="Furuya K."/>
            <person name="Guo Y."/>
            <person name="Pidoux A."/>
            <person name="Chen H.M."/>
            <person name="Robbertse B."/>
            <person name="Goldberg J.M."/>
            <person name="Aoki K."/>
            <person name="Bayne E.H."/>
            <person name="Berlin A.M."/>
            <person name="Desjardins C.A."/>
            <person name="Dobbs E."/>
            <person name="Dukaj L."/>
            <person name="Fan L."/>
            <person name="FitzGerald M.G."/>
            <person name="French C."/>
            <person name="Gujja S."/>
            <person name="Hansen K."/>
            <person name="Keifenheim D."/>
            <person name="Levin J.Z."/>
            <person name="Mosher R.A."/>
            <person name="Mueller C.A."/>
            <person name="Pfiffner J."/>
            <person name="Priest M."/>
            <person name="Russ C."/>
            <person name="Smialowska A."/>
            <person name="Swoboda P."/>
            <person name="Sykes S.M."/>
            <person name="Vaughn M."/>
            <person name="Vengrova S."/>
            <person name="Yoder R."/>
            <person name="Zeng Q."/>
            <person name="Allshire R."/>
            <person name="Baulcombe D."/>
            <person name="Birren B.W."/>
            <person name="Brown W."/>
            <person name="Ekwall K."/>
            <person name="Kellis M."/>
            <person name="Leatherwood J."/>
            <person name="Levin H."/>
            <person name="Margalit H."/>
            <person name="Martienssen R."/>
            <person name="Nieduszynski C.A."/>
            <person name="Spatafora J.W."/>
            <person name="Friedman N."/>
            <person name="Dalgaard J.Z."/>
            <person name="Baumann P."/>
            <person name="Niki H."/>
            <person name="Regev A."/>
            <person name="Nusbaum C."/>
        </authorList>
    </citation>
    <scope>REVISION OF GENE MODEL</scope>
</reference>
<reference key="3">
    <citation type="journal article" date="2002" name="Mol. Biol. Cell">
        <title>The multiprotein exocyst complex is essential for cell separation in Schizosaccharomyces pombe.</title>
        <authorList>
            <person name="Wang H."/>
            <person name="Tang X."/>
            <person name="Liu J."/>
            <person name="Trautmann S."/>
            <person name="Balasundaram D."/>
            <person name="McCollum D."/>
            <person name="Balasubramanian M.K."/>
        </authorList>
    </citation>
    <scope>IDENTIFICATION IN THE EXOCYST COMPLEX</scope>
    <scope>FUNCTION</scope>
    <scope>SUBCELLULAR LOCATION</scope>
</reference>
<reference key="4">
    <citation type="journal article" date="2006" name="Nat. Biotechnol.">
        <title>ORFeome cloning and global analysis of protein localization in the fission yeast Schizosaccharomyces pombe.</title>
        <authorList>
            <person name="Matsuyama A."/>
            <person name="Arai R."/>
            <person name="Yashiroda Y."/>
            <person name="Shirai A."/>
            <person name="Kamata A."/>
            <person name="Sekido S."/>
            <person name="Kobayashi Y."/>
            <person name="Hashimoto A."/>
            <person name="Hamamoto M."/>
            <person name="Hiraoka Y."/>
            <person name="Horinouchi S."/>
            <person name="Yoshida M."/>
        </authorList>
    </citation>
    <scope>SUBCELLULAR LOCATION [LARGE SCALE ANALYSIS]</scope>
</reference>
<gene>
    <name type="primary">sec6</name>
    <name type="ORF">SPCC1235.10c</name>
</gene>
<sequence>MTAAASDDAVYNKVADILRQCEDFHRLSTHIERFEREQASLNMHVKTELEKHVEAVELGKLALHDAQTKRVKLLQELHNMLTLCESAREMVDEFPLISRMSRIYKNCYATKQMISQLNNLVKETDVIEDMLREDLELDSDMPNLLRAHYKLSKLREFREEALYQASLEGQSDLPITLENSFSNLNTLSDNFDRLVLNFCRNIFQLVKSGHIKTIVQIFKIVEAEESSDEVLKSIRDAKSSLPDSQDGPFLSLQGMTRQLRNFRLRVLEEFQGAAAENFQRAWVSYLEDGSGELNLDFIFEDLKVAFYVLPDLTPPSYNIAKTFASIYQECLVGLVTKAVSLDTPAAVYLYLINFHREYRKFFEENAPFSVDEVEPGLEDGKDGILVREYTRLFTQKIREWSDKLFQSSVDTFMKRESEPELDSDGNYGLQGTIIFFQMITQQINIISHTNNSDVVGIVLSSIMYIMQSMQDQWKSVMRSELSQQLSGNPESVPPGLMEYLLAVANDNLKCAGFMDNTLLNTFELITSEREEDLREAFGKTVDGYILISDIGVSQIVAIISNDVKPALTSLFQPNWYQSSNMKLIVDTFRDYIVDCIEHMVPGLFDVFLLEASNALTISYLRSIFNKNACFDGDNAIQQIRSDIALAIRVFGEYMAAEHLRSTFEPIEKLLLGMLDADVETVSEYFHLLKEAYWDAPLSLVEAVLQNRTDLEKSIIKKMIDIVRHENDSLQIDTSQQPTVFSQVTSLSGSSIL</sequence>
<comment type="function">
    <text evidence="1">Component of the exocyst complex involved in the docking of exocytic vesicles with fusion sites on the plasma membrane.</text>
</comment>
<comment type="subunit">
    <text evidence="1">The exocyst complex is composed of sec3, sec5, sec6, sec8, sec10, sec15, exo70 and exo84.</text>
</comment>
<comment type="subcellular location">
    <subcellularLocation>
        <location evidence="2">Nucleus</location>
    </subcellularLocation>
    <subcellularLocation>
        <location evidence="1">Cell tip</location>
    </subcellularLocation>
    <subcellularLocation>
        <location evidence="2">Cytoplasm</location>
        <location evidence="2">Cytoskeleton</location>
        <location evidence="2">Spindle pole</location>
    </subcellularLocation>
</comment>
<comment type="similarity">
    <text evidence="3">Belongs to the SEC6 family.</text>
</comment>